<proteinExistence type="inferred from homology"/>
<organism>
    <name type="scientific">Burkholderia pseudomallei (strain 668)</name>
    <dbReference type="NCBI Taxonomy" id="320373"/>
    <lineage>
        <taxon>Bacteria</taxon>
        <taxon>Pseudomonadati</taxon>
        <taxon>Pseudomonadota</taxon>
        <taxon>Betaproteobacteria</taxon>
        <taxon>Burkholderiales</taxon>
        <taxon>Burkholderiaceae</taxon>
        <taxon>Burkholderia</taxon>
        <taxon>pseudomallei group</taxon>
    </lineage>
</organism>
<comment type="function">
    <text evidence="1">F(1)F(0) ATP synthase produces ATP from ADP in the presence of a proton or sodium gradient. F-type ATPases consist of two structural domains, F(1) containing the extramembraneous catalytic core and F(0) containing the membrane proton channel, linked together by a central stalk and a peripheral stalk. During catalysis, ATP synthesis in the catalytic domain of F(1) is coupled via a rotary mechanism of the central stalk subunits to proton translocation.</text>
</comment>
<comment type="function">
    <text evidence="1">This protein is part of the stalk that links CF(0) to CF(1). It either transmits conformational changes from CF(0) to CF(1) or is implicated in proton conduction.</text>
</comment>
<comment type="subunit">
    <text evidence="1">F-type ATPases have 2 components, F(1) - the catalytic core - and F(0) - the membrane proton channel. F(1) has five subunits: alpha(3), beta(3), gamma(1), delta(1), epsilon(1). F(0) has three main subunits: a(1), b(2) and c(10-14). The alpha and beta chains form an alternating ring which encloses part of the gamma chain. F(1) is attached to F(0) by a central stalk formed by the gamma and epsilon chains, while a peripheral stalk is formed by the delta and b chains.</text>
</comment>
<comment type="subcellular location">
    <subcellularLocation>
        <location evidence="1">Cell inner membrane</location>
        <topology evidence="1">Peripheral membrane protein</topology>
    </subcellularLocation>
</comment>
<comment type="similarity">
    <text evidence="1">Belongs to the ATPase delta chain family.</text>
</comment>
<protein>
    <recommendedName>
        <fullName evidence="1">ATP synthase subunit delta</fullName>
    </recommendedName>
    <alternativeName>
        <fullName evidence="1">ATP synthase F(1) sector subunit delta</fullName>
    </alternativeName>
    <alternativeName>
        <fullName evidence="1">F-type ATPase subunit delta</fullName>
        <shortName evidence="1">F-ATPase subunit delta</shortName>
    </alternativeName>
</protein>
<name>ATPD_BURP6</name>
<reference key="1">
    <citation type="journal article" date="2010" name="Genome Biol. Evol.">
        <title>Continuing evolution of Burkholderia mallei through genome reduction and large-scale rearrangements.</title>
        <authorList>
            <person name="Losada L."/>
            <person name="Ronning C.M."/>
            <person name="DeShazer D."/>
            <person name="Woods D."/>
            <person name="Fedorova N."/>
            <person name="Kim H.S."/>
            <person name="Shabalina S.A."/>
            <person name="Pearson T.R."/>
            <person name="Brinkac L."/>
            <person name="Tan P."/>
            <person name="Nandi T."/>
            <person name="Crabtree J."/>
            <person name="Badger J."/>
            <person name="Beckstrom-Sternberg S."/>
            <person name="Saqib M."/>
            <person name="Schutzer S.E."/>
            <person name="Keim P."/>
            <person name="Nierman W.C."/>
        </authorList>
    </citation>
    <scope>NUCLEOTIDE SEQUENCE [LARGE SCALE GENOMIC DNA]</scope>
    <source>
        <strain>668</strain>
    </source>
</reference>
<feature type="chain" id="PRO_0000370927" description="ATP synthase subunit delta">
    <location>
        <begin position="1"/>
        <end position="179"/>
    </location>
</feature>
<evidence type="ECO:0000255" key="1">
    <source>
        <dbReference type="HAMAP-Rule" id="MF_01416"/>
    </source>
</evidence>
<gene>
    <name evidence="1" type="primary">atpH</name>
    <name type="ordered locus">BURPS668_3971</name>
</gene>
<accession>A3NF43</accession>
<dbReference type="EMBL" id="CP000570">
    <property type="protein sequence ID" value="ABN84069.1"/>
    <property type="molecule type" value="Genomic_DNA"/>
</dbReference>
<dbReference type="RefSeq" id="WP_004195829.1">
    <property type="nucleotide sequence ID" value="NC_009074.1"/>
</dbReference>
<dbReference type="SMR" id="A3NF43"/>
<dbReference type="KEGG" id="bpd:BURPS668_3971"/>
<dbReference type="HOGENOM" id="CLU_085114_3_0_4"/>
<dbReference type="GO" id="GO:0005886">
    <property type="term" value="C:plasma membrane"/>
    <property type="evidence" value="ECO:0007669"/>
    <property type="project" value="UniProtKB-SubCell"/>
</dbReference>
<dbReference type="GO" id="GO:0045259">
    <property type="term" value="C:proton-transporting ATP synthase complex"/>
    <property type="evidence" value="ECO:0007669"/>
    <property type="project" value="UniProtKB-KW"/>
</dbReference>
<dbReference type="GO" id="GO:0046933">
    <property type="term" value="F:proton-transporting ATP synthase activity, rotational mechanism"/>
    <property type="evidence" value="ECO:0007669"/>
    <property type="project" value="UniProtKB-UniRule"/>
</dbReference>
<dbReference type="Gene3D" id="1.10.520.20">
    <property type="entry name" value="N-terminal domain of the delta subunit of the F1F0-ATP synthase"/>
    <property type="match status" value="1"/>
</dbReference>
<dbReference type="HAMAP" id="MF_01416">
    <property type="entry name" value="ATP_synth_delta_bact"/>
    <property type="match status" value="1"/>
</dbReference>
<dbReference type="InterPro" id="IPR026015">
    <property type="entry name" value="ATP_synth_OSCP/delta_N_sf"/>
</dbReference>
<dbReference type="InterPro" id="IPR000711">
    <property type="entry name" value="ATPase_OSCP/dsu"/>
</dbReference>
<dbReference type="NCBIfam" id="TIGR01145">
    <property type="entry name" value="ATP_synt_delta"/>
    <property type="match status" value="1"/>
</dbReference>
<dbReference type="NCBIfam" id="NF004402">
    <property type="entry name" value="PRK05758.2-2"/>
    <property type="match status" value="1"/>
</dbReference>
<dbReference type="PANTHER" id="PTHR11910">
    <property type="entry name" value="ATP SYNTHASE DELTA CHAIN"/>
    <property type="match status" value="1"/>
</dbReference>
<dbReference type="Pfam" id="PF00213">
    <property type="entry name" value="OSCP"/>
    <property type="match status" value="1"/>
</dbReference>
<dbReference type="PRINTS" id="PR00125">
    <property type="entry name" value="ATPASEDELTA"/>
</dbReference>
<dbReference type="SUPFAM" id="SSF47928">
    <property type="entry name" value="N-terminal domain of the delta subunit of the F1F0-ATP synthase"/>
    <property type="match status" value="1"/>
</dbReference>
<sequence length="179" mass="18957">MAELATIARPYAEALFRVAEGGDISAWSTLVQELAQVAQLPEVLSVASSPKVSRTQVAELLLAALKSPLASGAQAKNFVQMLVDNHRIALLPEIAVQFEALKNAREGAADVQIVSAFPLEGAQLAELVTSLERKFKRKLKPAVEVDSSLIGGVRVTVGDEVLDTSVRARLAGMQAALTA</sequence>
<keyword id="KW-0066">ATP synthesis</keyword>
<keyword id="KW-0997">Cell inner membrane</keyword>
<keyword id="KW-1003">Cell membrane</keyword>
<keyword id="KW-0139">CF(1)</keyword>
<keyword id="KW-0375">Hydrogen ion transport</keyword>
<keyword id="KW-0406">Ion transport</keyword>
<keyword id="KW-0472">Membrane</keyword>
<keyword id="KW-0813">Transport</keyword>